<proteinExistence type="inferred from homology"/>
<reference key="1">
    <citation type="journal article" date="2010" name="PLoS ONE">
        <title>Genome sequence of Cronobacter sakazakii BAA-894 and comparative genomic hybridization analysis with other Cronobacter species.</title>
        <authorList>
            <person name="Kucerova E."/>
            <person name="Clifton S.W."/>
            <person name="Xia X.Q."/>
            <person name="Long F."/>
            <person name="Porwollik S."/>
            <person name="Fulton L."/>
            <person name="Fronick C."/>
            <person name="Minx P."/>
            <person name="Kyung K."/>
            <person name="Warren W."/>
            <person name="Fulton R."/>
            <person name="Feng D."/>
            <person name="Wollam A."/>
            <person name="Shah N."/>
            <person name="Bhonagiri V."/>
            <person name="Nash W.E."/>
            <person name="Hallsworth-Pepin K."/>
            <person name="Wilson R.K."/>
            <person name="McClelland M."/>
            <person name="Forsythe S.J."/>
        </authorList>
    </citation>
    <scope>NUCLEOTIDE SEQUENCE [LARGE SCALE GENOMIC DNA]</scope>
    <source>
        <strain>ATCC BAA-894</strain>
    </source>
</reference>
<sequence>MSIRIIPQDQLEKSDKRTAEVIPPLLFPRLKNLYNRRAARLRELAENNPLGDYLRFAALIAHAQEVVLYDHPLEMDLTARIKAAAEQGKPPLDIHVLPRDGHWQKLLQSLIAELKPEMSGPALAVIENLEKASAQELETMASALFSADFSAVSSDKAPFIWAALSLYWAQMASLIPGKARAEYGEARQFCPVCGSIPVSSMVHIGSSQGLRYLHCNLCETEWHVVRVKCSNCEQTRDLHYWSLESEQAAIKAESCGDCGTYLKILYQEKDPNVEPVADDLASLVLDARMEQEGFARSSINPFLFPGEGE</sequence>
<protein>
    <recommendedName>
        <fullName evidence="1">Protein FdhE homolog</fullName>
    </recommendedName>
</protein>
<feature type="chain" id="PRO_1000056702" description="Protein FdhE homolog">
    <location>
        <begin position="1"/>
        <end position="309"/>
    </location>
</feature>
<dbReference type="EMBL" id="CP000783">
    <property type="protein sequence ID" value="ABU79051.1"/>
    <property type="molecule type" value="Genomic_DNA"/>
</dbReference>
<dbReference type="RefSeq" id="WP_007871963.1">
    <property type="nucleotide sequence ID" value="NC_009778.1"/>
</dbReference>
<dbReference type="SMR" id="A7ML45"/>
<dbReference type="GeneID" id="56732511"/>
<dbReference type="KEGG" id="esa:ESA_03865"/>
<dbReference type="HOGENOM" id="CLU_055275_0_0_6"/>
<dbReference type="Proteomes" id="UP000000260">
    <property type="component" value="Chromosome"/>
</dbReference>
<dbReference type="GO" id="GO:0005829">
    <property type="term" value="C:cytosol"/>
    <property type="evidence" value="ECO:0007669"/>
    <property type="project" value="TreeGrafter"/>
</dbReference>
<dbReference type="GO" id="GO:0008199">
    <property type="term" value="F:ferric iron binding"/>
    <property type="evidence" value="ECO:0007669"/>
    <property type="project" value="TreeGrafter"/>
</dbReference>
<dbReference type="GO" id="GO:0051604">
    <property type="term" value="P:protein maturation"/>
    <property type="evidence" value="ECO:0007669"/>
    <property type="project" value="TreeGrafter"/>
</dbReference>
<dbReference type="CDD" id="cd16341">
    <property type="entry name" value="FdhE"/>
    <property type="match status" value="1"/>
</dbReference>
<dbReference type="FunFam" id="3.90.1670.10:FF:000001">
    <property type="entry name" value="Protein FdhE"/>
    <property type="match status" value="1"/>
</dbReference>
<dbReference type="Gene3D" id="3.90.1670.10">
    <property type="entry name" value="FdhE-like domain"/>
    <property type="match status" value="1"/>
</dbReference>
<dbReference type="HAMAP" id="MF_00611">
    <property type="entry name" value="FdeH"/>
    <property type="match status" value="1"/>
</dbReference>
<dbReference type="InterPro" id="IPR024064">
    <property type="entry name" value="FdhE-like_sf"/>
</dbReference>
<dbReference type="InterPro" id="IPR056796">
    <property type="entry name" value="FdhE_C"/>
</dbReference>
<dbReference type="InterPro" id="IPR056797">
    <property type="entry name" value="FdhE_central"/>
</dbReference>
<dbReference type="InterPro" id="IPR056774">
    <property type="entry name" value="FdhE_N"/>
</dbReference>
<dbReference type="InterPro" id="IPR006452">
    <property type="entry name" value="Formate_DH_accessory"/>
</dbReference>
<dbReference type="NCBIfam" id="TIGR01562">
    <property type="entry name" value="FdhE"/>
    <property type="match status" value="1"/>
</dbReference>
<dbReference type="NCBIfam" id="NF002925">
    <property type="entry name" value="PRK03564.1"/>
    <property type="match status" value="1"/>
</dbReference>
<dbReference type="PANTHER" id="PTHR37689">
    <property type="entry name" value="PROTEIN FDHE"/>
    <property type="match status" value="1"/>
</dbReference>
<dbReference type="PANTHER" id="PTHR37689:SF1">
    <property type="entry name" value="PROTEIN FDHE"/>
    <property type="match status" value="1"/>
</dbReference>
<dbReference type="Pfam" id="PF24860">
    <property type="entry name" value="FdhE_C"/>
    <property type="match status" value="1"/>
</dbReference>
<dbReference type="Pfam" id="PF24859">
    <property type="entry name" value="FdhE_central"/>
    <property type="match status" value="1"/>
</dbReference>
<dbReference type="Pfam" id="PF04216">
    <property type="entry name" value="FdhE_N"/>
    <property type="match status" value="1"/>
</dbReference>
<dbReference type="PIRSF" id="PIRSF018296">
    <property type="entry name" value="Format_dh_formtn"/>
    <property type="match status" value="1"/>
</dbReference>
<dbReference type="SUPFAM" id="SSF144020">
    <property type="entry name" value="FdhE-like"/>
    <property type="match status" value="1"/>
</dbReference>
<evidence type="ECO:0000255" key="1">
    <source>
        <dbReference type="HAMAP-Rule" id="MF_00611"/>
    </source>
</evidence>
<keyword id="KW-0963">Cytoplasm</keyword>
<keyword id="KW-1185">Reference proteome</keyword>
<accession>A7ML45</accession>
<comment type="function">
    <text evidence="1">Necessary for formate dehydrogenase activity.</text>
</comment>
<comment type="subcellular location">
    <subcellularLocation>
        <location evidence="1">Cytoplasm</location>
    </subcellularLocation>
</comment>
<comment type="similarity">
    <text evidence="1">Belongs to the FdhE family.</text>
</comment>
<name>FDHE_CROS8</name>
<organism>
    <name type="scientific">Cronobacter sakazakii (strain ATCC BAA-894)</name>
    <name type="common">Enterobacter sakazakii</name>
    <dbReference type="NCBI Taxonomy" id="290339"/>
    <lineage>
        <taxon>Bacteria</taxon>
        <taxon>Pseudomonadati</taxon>
        <taxon>Pseudomonadota</taxon>
        <taxon>Gammaproteobacteria</taxon>
        <taxon>Enterobacterales</taxon>
        <taxon>Enterobacteriaceae</taxon>
        <taxon>Cronobacter</taxon>
    </lineage>
</organism>
<gene>
    <name evidence="1" type="primary">fdhE</name>
    <name type="ordered locus">ESA_03865</name>
</gene>